<protein>
    <recommendedName>
        <fullName evidence="1">Putative ribose/galactose/methyl galactoside import ATP-binding protein</fullName>
        <ecNumber evidence="1">7.5.2.11</ecNumber>
        <ecNumber evidence="1">7.5.2.7</ecNumber>
    </recommendedName>
</protein>
<reference key="1">
    <citation type="submission" date="2006-02" db="EMBL/GenBank/DDBJ databases">
        <title>Complete sequence of chromosome of Rhodoferax ferrireducens DSM 15236.</title>
        <authorList>
            <person name="Copeland A."/>
            <person name="Lucas S."/>
            <person name="Lapidus A."/>
            <person name="Barry K."/>
            <person name="Detter J.C."/>
            <person name="Glavina del Rio T."/>
            <person name="Hammon N."/>
            <person name="Israni S."/>
            <person name="Pitluck S."/>
            <person name="Brettin T."/>
            <person name="Bruce D."/>
            <person name="Han C."/>
            <person name="Tapia R."/>
            <person name="Gilna P."/>
            <person name="Kiss H."/>
            <person name="Schmutz J."/>
            <person name="Larimer F."/>
            <person name="Land M."/>
            <person name="Kyrpides N."/>
            <person name="Ivanova N."/>
            <person name="Richardson P."/>
        </authorList>
    </citation>
    <scope>NUCLEOTIDE SEQUENCE [LARGE SCALE GENOMIC DNA]</scope>
    <source>
        <strain>ATCC BAA-621 / DSM 15236 / T118</strain>
    </source>
</reference>
<name>RGMG_ALBFT</name>
<gene>
    <name type="ordered locus">Rfer_3129</name>
</gene>
<keyword id="KW-0067">ATP-binding</keyword>
<keyword id="KW-0997">Cell inner membrane</keyword>
<keyword id="KW-1003">Cell membrane</keyword>
<keyword id="KW-0472">Membrane</keyword>
<keyword id="KW-0547">Nucleotide-binding</keyword>
<keyword id="KW-1185">Reference proteome</keyword>
<keyword id="KW-0677">Repeat</keyword>
<keyword id="KW-0762">Sugar transport</keyword>
<keyword id="KW-1278">Translocase</keyword>
<keyword id="KW-0813">Transport</keyword>
<sequence>MTSLISVKNLSKSFPGVKALDQVHFDLRAGEVHALMGENGAGKSTLMKILAGVYRKDSGEMLLDGQPVEIESPAHAQSLAIGIVHQELHLMNHLTAAQNIYLGREPRHCGGLFLDEARLNQDTQILFDRLNLALAPTTAIGELTVARQQMVEIAKALSFKSRVLIMDEPTAALNNAEIDELFRIIRQLKSEGVGIVYISHKMDEIQRIADRITVMRDGSTIGTVPASTPMQQVIAMMVGRNLEQAEKHIPDTSANEVLLEVRGLNRGRVIRDVNFSVRRGEILGFAGLMGAGRTEVARAVFGADPIDSGEVRVRGELIRLASPQDAVQAGIGYLSEDRKHFGLATGMDVESNITLPSLKRWLKWGLFLNQPAIHHISQQMVGKLRIKTPSLTQTARLLSGGNQQKVVVAKWLVQDCDVLIFDEPTRGIDVGAKSEIYKLLNELATQGKAIIVISSELPEVLLLSHRVLVMCEGRITGEVAGDVATQETLMALATRRESLASTVH</sequence>
<dbReference type="EC" id="7.5.2.11" evidence="1"/>
<dbReference type="EC" id="7.5.2.7" evidence="1"/>
<dbReference type="EMBL" id="CP000267">
    <property type="protein sequence ID" value="ABD70838.1"/>
    <property type="molecule type" value="Genomic_DNA"/>
</dbReference>
<dbReference type="RefSeq" id="WP_011465401.1">
    <property type="nucleotide sequence ID" value="NC_007908.1"/>
</dbReference>
<dbReference type="SMR" id="Q21TR5"/>
<dbReference type="STRING" id="338969.Rfer_3129"/>
<dbReference type="KEGG" id="rfr:Rfer_3129"/>
<dbReference type="eggNOG" id="COG1129">
    <property type="taxonomic scope" value="Bacteria"/>
</dbReference>
<dbReference type="HOGENOM" id="CLU_000604_92_3_4"/>
<dbReference type="OrthoDB" id="9776369at2"/>
<dbReference type="Proteomes" id="UP000008332">
    <property type="component" value="Chromosome"/>
</dbReference>
<dbReference type="GO" id="GO:0005886">
    <property type="term" value="C:plasma membrane"/>
    <property type="evidence" value="ECO:0007669"/>
    <property type="project" value="UniProtKB-SubCell"/>
</dbReference>
<dbReference type="GO" id="GO:0015611">
    <property type="term" value="F:ABC-type D-ribose transporter activity"/>
    <property type="evidence" value="ECO:0007669"/>
    <property type="project" value="UniProtKB-EC"/>
</dbReference>
<dbReference type="GO" id="GO:0005524">
    <property type="term" value="F:ATP binding"/>
    <property type="evidence" value="ECO:0007669"/>
    <property type="project" value="UniProtKB-KW"/>
</dbReference>
<dbReference type="GO" id="GO:0016887">
    <property type="term" value="F:ATP hydrolysis activity"/>
    <property type="evidence" value="ECO:0007669"/>
    <property type="project" value="InterPro"/>
</dbReference>
<dbReference type="CDD" id="cd03216">
    <property type="entry name" value="ABC_Carb_Monos_I"/>
    <property type="match status" value="1"/>
</dbReference>
<dbReference type="CDD" id="cd03215">
    <property type="entry name" value="ABC_Carb_Monos_II"/>
    <property type="match status" value="1"/>
</dbReference>
<dbReference type="FunFam" id="3.40.50.300:FF:000127">
    <property type="entry name" value="Ribose import ATP-binding protein RbsA"/>
    <property type="match status" value="1"/>
</dbReference>
<dbReference type="Gene3D" id="3.40.50.300">
    <property type="entry name" value="P-loop containing nucleotide triphosphate hydrolases"/>
    <property type="match status" value="2"/>
</dbReference>
<dbReference type="InterPro" id="IPR003593">
    <property type="entry name" value="AAA+_ATPase"/>
</dbReference>
<dbReference type="InterPro" id="IPR050107">
    <property type="entry name" value="ABC_carbohydrate_import_ATPase"/>
</dbReference>
<dbReference type="InterPro" id="IPR003439">
    <property type="entry name" value="ABC_transporter-like_ATP-bd"/>
</dbReference>
<dbReference type="InterPro" id="IPR017871">
    <property type="entry name" value="ABC_transporter-like_CS"/>
</dbReference>
<dbReference type="InterPro" id="IPR027417">
    <property type="entry name" value="P-loop_NTPase"/>
</dbReference>
<dbReference type="PANTHER" id="PTHR43790">
    <property type="entry name" value="CARBOHYDRATE TRANSPORT ATP-BINDING PROTEIN MG119-RELATED"/>
    <property type="match status" value="1"/>
</dbReference>
<dbReference type="PANTHER" id="PTHR43790:SF3">
    <property type="entry name" value="D-ALLOSE IMPORT ATP-BINDING PROTEIN ALSA-RELATED"/>
    <property type="match status" value="1"/>
</dbReference>
<dbReference type="Pfam" id="PF00005">
    <property type="entry name" value="ABC_tran"/>
    <property type="match status" value="2"/>
</dbReference>
<dbReference type="SMART" id="SM00382">
    <property type="entry name" value="AAA"/>
    <property type="match status" value="2"/>
</dbReference>
<dbReference type="SUPFAM" id="SSF52540">
    <property type="entry name" value="P-loop containing nucleoside triphosphate hydrolases"/>
    <property type="match status" value="2"/>
</dbReference>
<dbReference type="PROSITE" id="PS00211">
    <property type="entry name" value="ABC_TRANSPORTER_1"/>
    <property type="match status" value="1"/>
</dbReference>
<dbReference type="PROSITE" id="PS50893">
    <property type="entry name" value="ABC_TRANSPORTER_2"/>
    <property type="match status" value="2"/>
</dbReference>
<dbReference type="PROSITE" id="PS51260">
    <property type="entry name" value="MGLA"/>
    <property type="match status" value="1"/>
</dbReference>
<dbReference type="PROSITE" id="PS51254">
    <property type="entry name" value="RBSA"/>
    <property type="match status" value="1"/>
</dbReference>
<feature type="chain" id="PRO_0000262992" description="Putative ribose/galactose/methyl galactoside import ATP-binding protein">
    <location>
        <begin position="1"/>
        <end position="504"/>
    </location>
</feature>
<feature type="domain" description="ABC transporter 1" evidence="1">
    <location>
        <begin position="5"/>
        <end position="242"/>
    </location>
</feature>
<feature type="domain" description="ABC transporter 2" evidence="1">
    <location>
        <begin position="252"/>
        <end position="497"/>
    </location>
</feature>
<feature type="binding site" evidence="1">
    <location>
        <begin position="37"/>
        <end position="44"/>
    </location>
    <ligand>
        <name>ATP</name>
        <dbReference type="ChEBI" id="CHEBI:30616"/>
    </ligand>
</feature>
<proteinExistence type="inferred from homology"/>
<evidence type="ECO:0000255" key="1">
    <source>
        <dbReference type="HAMAP-Rule" id="MF_01717"/>
    </source>
</evidence>
<accession>Q21TR5</accession>
<comment type="function">
    <text evidence="1">Part of an ABC transporter complex involved in carbohydrate import. Could be involved in ribose, galactose and/or methyl galactoside import. Responsible for energy coupling to the transport system.</text>
</comment>
<comment type="catalytic activity">
    <reaction evidence="1">
        <text>D-ribose(out) + ATP + H2O = D-ribose(in) + ADP + phosphate + H(+)</text>
        <dbReference type="Rhea" id="RHEA:29903"/>
        <dbReference type="ChEBI" id="CHEBI:15377"/>
        <dbReference type="ChEBI" id="CHEBI:15378"/>
        <dbReference type="ChEBI" id="CHEBI:30616"/>
        <dbReference type="ChEBI" id="CHEBI:43474"/>
        <dbReference type="ChEBI" id="CHEBI:47013"/>
        <dbReference type="ChEBI" id="CHEBI:456216"/>
        <dbReference type="EC" id="7.5.2.7"/>
    </reaction>
</comment>
<comment type="catalytic activity">
    <reaction evidence="1">
        <text>D-galactose(out) + ATP + H2O = D-galactose(in) + ADP + phosphate + H(+)</text>
        <dbReference type="Rhea" id="RHEA:60156"/>
        <dbReference type="ChEBI" id="CHEBI:4139"/>
        <dbReference type="ChEBI" id="CHEBI:15377"/>
        <dbReference type="ChEBI" id="CHEBI:15378"/>
        <dbReference type="ChEBI" id="CHEBI:30616"/>
        <dbReference type="ChEBI" id="CHEBI:43474"/>
        <dbReference type="ChEBI" id="CHEBI:456216"/>
        <dbReference type="EC" id="7.5.2.11"/>
    </reaction>
</comment>
<comment type="subcellular location">
    <subcellularLocation>
        <location evidence="1">Cell inner membrane</location>
        <topology evidence="1">Peripheral membrane protein</topology>
    </subcellularLocation>
</comment>
<comment type="similarity">
    <text evidence="1">Belongs to the ABC transporter superfamily. Carbohydrate importer 2 (CUT2) (TC 3.A.1.2) family.</text>
</comment>
<organism>
    <name type="scientific">Albidiferax ferrireducens (strain ATCC BAA-621 / DSM 15236 / T118)</name>
    <name type="common">Rhodoferax ferrireducens</name>
    <dbReference type="NCBI Taxonomy" id="338969"/>
    <lineage>
        <taxon>Bacteria</taxon>
        <taxon>Pseudomonadati</taxon>
        <taxon>Pseudomonadota</taxon>
        <taxon>Betaproteobacteria</taxon>
        <taxon>Burkholderiales</taxon>
        <taxon>Comamonadaceae</taxon>
        <taxon>Rhodoferax</taxon>
    </lineage>
</organism>